<gene>
    <name evidence="1" type="primary">pyrB</name>
    <name type="ordered locus">Ping_3294</name>
</gene>
<reference key="1">
    <citation type="journal article" date="2008" name="BMC Genomics">
        <title>Genomics of an extreme psychrophile, Psychromonas ingrahamii.</title>
        <authorList>
            <person name="Riley M."/>
            <person name="Staley J.T."/>
            <person name="Danchin A."/>
            <person name="Wang T.Z."/>
            <person name="Brettin T.S."/>
            <person name="Hauser L.J."/>
            <person name="Land M.L."/>
            <person name="Thompson L.S."/>
        </authorList>
    </citation>
    <scope>NUCLEOTIDE SEQUENCE [LARGE SCALE GENOMIC DNA]</scope>
    <source>
        <strain>DSM 17664 / CCUG 51855 / 37</strain>
    </source>
</reference>
<comment type="function">
    <text evidence="1">Catalyzes the condensation of carbamoyl phosphate and aspartate to form carbamoyl aspartate and inorganic phosphate, the committed step in the de novo pyrimidine nucleotide biosynthesis pathway.</text>
</comment>
<comment type="catalytic activity">
    <reaction evidence="1">
        <text>carbamoyl phosphate + L-aspartate = N-carbamoyl-L-aspartate + phosphate + H(+)</text>
        <dbReference type="Rhea" id="RHEA:20013"/>
        <dbReference type="ChEBI" id="CHEBI:15378"/>
        <dbReference type="ChEBI" id="CHEBI:29991"/>
        <dbReference type="ChEBI" id="CHEBI:32814"/>
        <dbReference type="ChEBI" id="CHEBI:43474"/>
        <dbReference type="ChEBI" id="CHEBI:58228"/>
        <dbReference type="EC" id="2.1.3.2"/>
    </reaction>
</comment>
<comment type="pathway">
    <text evidence="1">Pyrimidine metabolism; UMP biosynthesis via de novo pathway; (S)-dihydroorotate from bicarbonate: step 2/3.</text>
</comment>
<comment type="subunit">
    <text evidence="1">Heterododecamer (2C3:3R2) of six catalytic PyrB chains organized as two trimers (C3), and six regulatory PyrI chains organized as three dimers (R2).</text>
</comment>
<comment type="similarity">
    <text evidence="1">Belongs to the aspartate/ornithine carbamoyltransferase superfamily. ATCase family.</text>
</comment>
<feature type="chain" id="PRO_0000301608" description="Aspartate carbamoyltransferase catalytic subunit">
    <location>
        <begin position="1"/>
        <end position="311"/>
    </location>
</feature>
<feature type="binding site" evidence="1">
    <location>
        <position position="55"/>
    </location>
    <ligand>
        <name>carbamoyl phosphate</name>
        <dbReference type="ChEBI" id="CHEBI:58228"/>
    </ligand>
</feature>
<feature type="binding site" evidence="1">
    <location>
        <position position="56"/>
    </location>
    <ligand>
        <name>carbamoyl phosphate</name>
        <dbReference type="ChEBI" id="CHEBI:58228"/>
    </ligand>
</feature>
<feature type="binding site" evidence="1">
    <location>
        <position position="85"/>
    </location>
    <ligand>
        <name>L-aspartate</name>
        <dbReference type="ChEBI" id="CHEBI:29991"/>
    </ligand>
</feature>
<feature type="binding site" evidence="1">
    <location>
        <position position="106"/>
    </location>
    <ligand>
        <name>carbamoyl phosphate</name>
        <dbReference type="ChEBI" id="CHEBI:58228"/>
    </ligand>
</feature>
<feature type="binding site" evidence="1">
    <location>
        <position position="134"/>
    </location>
    <ligand>
        <name>carbamoyl phosphate</name>
        <dbReference type="ChEBI" id="CHEBI:58228"/>
    </ligand>
</feature>
<feature type="binding site" evidence="1">
    <location>
        <position position="137"/>
    </location>
    <ligand>
        <name>carbamoyl phosphate</name>
        <dbReference type="ChEBI" id="CHEBI:58228"/>
    </ligand>
</feature>
<feature type="binding site" evidence="1">
    <location>
        <position position="167"/>
    </location>
    <ligand>
        <name>L-aspartate</name>
        <dbReference type="ChEBI" id="CHEBI:29991"/>
    </ligand>
</feature>
<feature type="binding site" evidence="1">
    <location>
        <position position="228"/>
    </location>
    <ligand>
        <name>L-aspartate</name>
        <dbReference type="ChEBI" id="CHEBI:29991"/>
    </ligand>
</feature>
<feature type="binding site" evidence="1">
    <location>
        <position position="266"/>
    </location>
    <ligand>
        <name>carbamoyl phosphate</name>
        <dbReference type="ChEBI" id="CHEBI:58228"/>
    </ligand>
</feature>
<feature type="binding site" evidence="1">
    <location>
        <position position="267"/>
    </location>
    <ligand>
        <name>carbamoyl phosphate</name>
        <dbReference type="ChEBI" id="CHEBI:58228"/>
    </ligand>
</feature>
<proteinExistence type="inferred from homology"/>
<name>PYRB_PSYIN</name>
<keyword id="KW-0665">Pyrimidine biosynthesis</keyword>
<keyword id="KW-1185">Reference proteome</keyword>
<keyword id="KW-0808">Transferase</keyword>
<dbReference type="EC" id="2.1.3.2" evidence="1"/>
<dbReference type="EMBL" id="CP000510">
    <property type="protein sequence ID" value="ABM04981.1"/>
    <property type="molecule type" value="Genomic_DNA"/>
</dbReference>
<dbReference type="RefSeq" id="WP_011771533.1">
    <property type="nucleotide sequence ID" value="NC_008709.1"/>
</dbReference>
<dbReference type="SMR" id="A1SZR6"/>
<dbReference type="STRING" id="357804.Ping_3294"/>
<dbReference type="KEGG" id="pin:Ping_3294"/>
<dbReference type="eggNOG" id="COG0540">
    <property type="taxonomic scope" value="Bacteria"/>
</dbReference>
<dbReference type="HOGENOM" id="CLU_043846_1_2_6"/>
<dbReference type="OrthoDB" id="9774690at2"/>
<dbReference type="UniPathway" id="UPA00070">
    <property type="reaction ID" value="UER00116"/>
</dbReference>
<dbReference type="Proteomes" id="UP000000639">
    <property type="component" value="Chromosome"/>
</dbReference>
<dbReference type="GO" id="GO:0005829">
    <property type="term" value="C:cytosol"/>
    <property type="evidence" value="ECO:0007669"/>
    <property type="project" value="TreeGrafter"/>
</dbReference>
<dbReference type="GO" id="GO:0016597">
    <property type="term" value="F:amino acid binding"/>
    <property type="evidence" value="ECO:0007669"/>
    <property type="project" value="InterPro"/>
</dbReference>
<dbReference type="GO" id="GO:0004070">
    <property type="term" value="F:aspartate carbamoyltransferase activity"/>
    <property type="evidence" value="ECO:0007669"/>
    <property type="project" value="UniProtKB-UniRule"/>
</dbReference>
<dbReference type="GO" id="GO:0006207">
    <property type="term" value="P:'de novo' pyrimidine nucleobase biosynthetic process"/>
    <property type="evidence" value="ECO:0007669"/>
    <property type="project" value="InterPro"/>
</dbReference>
<dbReference type="GO" id="GO:0044205">
    <property type="term" value="P:'de novo' UMP biosynthetic process"/>
    <property type="evidence" value="ECO:0007669"/>
    <property type="project" value="UniProtKB-UniRule"/>
</dbReference>
<dbReference type="GO" id="GO:0006520">
    <property type="term" value="P:amino acid metabolic process"/>
    <property type="evidence" value="ECO:0007669"/>
    <property type="project" value="InterPro"/>
</dbReference>
<dbReference type="FunFam" id="3.40.50.1370:FF:000001">
    <property type="entry name" value="Aspartate carbamoyltransferase"/>
    <property type="match status" value="1"/>
</dbReference>
<dbReference type="FunFam" id="3.40.50.1370:FF:000002">
    <property type="entry name" value="Aspartate carbamoyltransferase 2"/>
    <property type="match status" value="1"/>
</dbReference>
<dbReference type="Gene3D" id="3.40.50.1370">
    <property type="entry name" value="Aspartate/ornithine carbamoyltransferase"/>
    <property type="match status" value="2"/>
</dbReference>
<dbReference type="HAMAP" id="MF_00001">
    <property type="entry name" value="Asp_carb_tr"/>
    <property type="match status" value="1"/>
</dbReference>
<dbReference type="InterPro" id="IPR006132">
    <property type="entry name" value="Asp/Orn_carbamoyltranf_P-bd"/>
</dbReference>
<dbReference type="InterPro" id="IPR006130">
    <property type="entry name" value="Asp/Orn_carbamoylTrfase"/>
</dbReference>
<dbReference type="InterPro" id="IPR036901">
    <property type="entry name" value="Asp/Orn_carbamoylTrfase_sf"/>
</dbReference>
<dbReference type="InterPro" id="IPR002082">
    <property type="entry name" value="Asp_carbamoyltransf"/>
</dbReference>
<dbReference type="InterPro" id="IPR006131">
    <property type="entry name" value="Asp_carbamoyltransf_Asp/Orn-bd"/>
</dbReference>
<dbReference type="NCBIfam" id="TIGR00670">
    <property type="entry name" value="asp_carb_tr"/>
    <property type="match status" value="1"/>
</dbReference>
<dbReference type="NCBIfam" id="NF002032">
    <property type="entry name" value="PRK00856.1"/>
    <property type="match status" value="1"/>
</dbReference>
<dbReference type="PANTHER" id="PTHR45753:SF6">
    <property type="entry name" value="ASPARTATE CARBAMOYLTRANSFERASE"/>
    <property type="match status" value="1"/>
</dbReference>
<dbReference type="PANTHER" id="PTHR45753">
    <property type="entry name" value="ORNITHINE CARBAMOYLTRANSFERASE, MITOCHONDRIAL"/>
    <property type="match status" value="1"/>
</dbReference>
<dbReference type="Pfam" id="PF00185">
    <property type="entry name" value="OTCace"/>
    <property type="match status" value="1"/>
</dbReference>
<dbReference type="Pfam" id="PF02729">
    <property type="entry name" value="OTCace_N"/>
    <property type="match status" value="1"/>
</dbReference>
<dbReference type="PRINTS" id="PR00100">
    <property type="entry name" value="AOTCASE"/>
</dbReference>
<dbReference type="PRINTS" id="PR00101">
    <property type="entry name" value="ATCASE"/>
</dbReference>
<dbReference type="SUPFAM" id="SSF53671">
    <property type="entry name" value="Aspartate/ornithine carbamoyltransferase"/>
    <property type="match status" value="1"/>
</dbReference>
<dbReference type="PROSITE" id="PS00097">
    <property type="entry name" value="CARBAMOYLTRANSFERASE"/>
    <property type="match status" value="1"/>
</dbReference>
<organism>
    <name type="scientific">Psychromonas ingrahamii (strain DSM 17664 / CCUG 51855 / 37)</name>
    <dbReference type="NCBI Taxonomy" id="357804"/>
    <lineage>
        <taxon>Bacteria</taxon>
        <taxon>Pseudomonadati</taxon>
        <taxon>Pseudomonadota</taxon>
        <taxon>Gammaproteobacteria</taxon>
        <taxon>Alteromonadales</taxon>
        <taxon>Psychromonadaceae</taxon>
        <taxon>Psychromonas</taxon>
    </lineage>
</organism>
<evidence type="ECO:0000255" key="1">
    <source>
        <dbReference type="HAMAP-Rule" id="MF_00001"/>
    </source>
</evidence>
<protein>
    <recommendedName>
        <fullName evidence="1">Aspartate carbamoyltransferase catalytic subunit</fullName>
        <ecNumber evidence="1">2.1.3.2</ecNumber>
    </recommendedName>
    <alternativeName>
        <fullName evidence="1">Aspartate transcarbamylase</fullName>
        <shortName evidence="1">ATCase</shortName>
    </alternativeName>
</protein>
<sequence>MNNPLYQKNIISISDLSRAELELILTTAQSLKHNPQPELLKNKVIASCFFEASTRTRLSFATAVQRLGGTVIGFDNAGNTSLAQKGETLADSVKIIASYADAFFIRHPQEGAARLAAEFTNIPVINGGDGSNQHPTQTLLDLFTIYETQNRLDNLNIAFVGDLKYGRTVHSLAQALSLFNCNFYFIAPEALAMPDYILEELNEKGINYSVHSSIEEVVDSLDVLYMTRVQKERFDETEYQHIKSAFLLNADMLENVRENLKVLHPLPRVDEININVDKTPYAYYFQQAQNGIYARQALLALLLTNHFQDQA</sequence>
<accession>A1SZR6</accession>